<comment type="function">
    <text evidence="1">Core subunit of the mitochondrial membrane respiratory chain NADH dehydrogenase (Complex I) that is believed to belong to the minimal assembly required for catalysis. Complex I functions in the transfer of electrons from NADH to the respiratory chain. The immediate electron acceptor for the enzyme is believed to be ubiquinone (By similarity). This is the largest subunit of complex I and it is a component of the iron-sulfur (IP) fragment of the enzyme. It may form part of the active site crevice where NADH is oxidized (By similarity).</text>
</comment>
<comment type="catalytic activity">
    <reaction>
        <text>a ubiquinone + NADH + 5 H(+)(in) = a ubiquinol + NAD(+) + 4 H(+)(out)</text>
        <dbReference type="Rhea" id="RHEA:29091"/>
        <dbReference type="Rhea" id="RHEA-COMP:9565"/>
        <dbReference type="Rhea" id="RHEA-COMP:9566"/>
        <dbReference type="ChEBI" id="CHEBI:15378"/>
        <dbReference type="ChEBI" id="CHEBI:16389"/>
        <dbReference type="ChEBI" id="CHEBI:17976"/>
        <dbReference type="ChEBI" id="CHEBI:57540"/>
        <dbReference type="ChEBI" id="CHEBI:57945"/>
        <dbReference type="EC" id="7.1.1.2"/>
    </reaction>
</comment>
<comment type="cofactor">
    <cofactor evidence="1">
        <name>[2Fe-2S] cluster</name>
        <dbReference type="ChEBI" id="CHEBI:190135"/>
    </cofactor>
    <text evidence="1">Binds 1 [2Fe-2S] cluster per subunit.</text>
</comment>
<comment type="cofactor">
    <cofactor evidence="1">
        <name>[4Fe-4S] cluster</name>
        <dbReference type="ChEBI" id="CHEBI:49883"/>
    </cofactor>
    <text evidence="1">Binds 2 [4Fe-4S] clusters per subunit.</text>
</comment>
<comment type="subunit">
    <text evidence="1">Complex I is composed of about 45 different subunits.</text>
</comment>
<comment type="subcellular location">
    <subcellularLocation>
        <location evidence="1">Mitochondrion inner membrane</location>
    </subcellularLocation>
    <text evidence="1">Matrix and cytoplasmic side of the mitochondrial inner membrane.</text>
</comment>
<comment type="similarity">
    <text evidence="5">Belongs to the complex I 75 kDa subunit family.</text>
</comment>
<gene>
    <name evidence="6" type="primary">ND-75</name>
    <name type="synonym">ND75</name>
    <name evidence="6" type="ORF">CG2286</name>
</gene>
<organism>
    <name type="scientific">Drosophila melanogaster</name>
    <name type="common">Fruit fly</name>
    <dbReference type="NCBI Taxonomy" id="7227"/>
    <lineage>
        <taxon>Eukaryota</taxon>
        <taxon>Metazoa</taxon>
        <taxon>Ecdysozoa</taxon>
        <taxon>Arthropoda</taxon>
        <taxon>Hexapoda</taxon>
        <taxon>Insecta</taxon>
        <taxon>Pterygota</taxon>
        <taxon>Neoptera</taxon>
        <taxon>Endopterygota</taxon>
        <taxon>Diptera</taxon>
        <taxon>Brachycera</taxon>
        <taxon>Muscomorpha</taxon>
        <taxon>Ephydroidea</taxon>
        <taxon>Drosophilidae</taxon>
        <taxon>Drosophila</taxon>
        <taxon>Sophophora</taxon>
    </lineage>
</organism>
<accession>Q94511</accession>
<accession>Q9W3H1</accession>
<protein>
    <recommendedName>
        <fullName>NADH-ubiquinone oxidoreductase 75 kDa subunit, mitochondrial</fullName>
        <ecNumber>7.1.1.2</ecNumber>
    </recommendedName>
    <alternativeName>
        <fullName>Complex I-75kD</fullName>
        <shortName>CI-75kD</shortName>
    </alternativeName>
</protein>
<reference key="1">
    <citation type="journal article" date="2000" name="Science">
        <title>The genome sequence of Drosophila melanogaster.</title>
        <authorList>
            <person name="Adams M.D."/>
            <person name="Celniker S.E."/>
            <person name="Holt R.A."/>
            <person name="Evans C.A."/>
            <person name="Gocayne J.D."/>
            <person name="Amanatides P.G."/>
            <person name="Scherer S.E."/>
            <person name="Li P.W."/>
            <person name="Hoskins R.A."/>
            <person name="Galle R.F."/>
            <person name="George R.A."/>
            <person name="Lewis S.E."/>
            <person name="Richards S."/>
            <person name="Ashburner M."/>
            <person name="Henderson S.N."/>
            <person name="Sutton G.G."/>
            <person name="Wortman J.R."/>
            <person name="Yandell M.D."/>
            <person name="Zhang Q."/>
            <person name="Chen L.X."/>
            <person name="Brandon R.C."/>
            <person name="Rogers Y.-H.C."/>
            <person name="Blazej R.G."/>
            <person name="Champe M."/>
            <person name="Pfeiffer B.D."/>
            <person name="Wan K.H."/>
            <person name="Doyle C."/>
            <person name="Baxter E.G."/>
            <person name="Helt G."/>
            <person name="Nelson C.R."/>
            <person name="Miklos G.L.G."/>
            <person name="Abril J.F."/>
            <person name="Agbayani A."/>
            <person name="An H.-J."/>
            <person name="Andrews-Pfannkoch C."/>
            <person name="Baldwin D."/>
            <person name="Ballew R.M."/>
            <person name="Basu A."/>
            <person name="Baxendale J."/>
            <person name="Bayraktaroglu L."/>
            <person name="Beasley E.M."/>
            <person name="Beeson K.Y."/>
            <person name="Benos P.V."/>
            <person name="Berman B.P."/>
            <person name="Bhandari D."/>
            <person name="Bolshakov S."/>
            <person name="Borkova D."/>
            <person name="Botchan M.R."/>
            <person name="Bouck J."/>
            <person name="Brokstein P."/>
            <person name="Brottier P."/>
            <person name="Burtis K.C."/>
            <person name="Busam D.A."/>
            <person name="Butler H."/>
            <person name="Cadieu E."/>
            <person name="Center A."/>
            <person name="Chandra I."/>
            <person name="Cherry J.M."/>
            <person name="Cawley S."/>
            <person name="Dahlke C."/>
            <person name="Davenport L.B."/>
            <person name="Davies P."/>
            <person name="de Pablos B."/>
            <person name="Delcher A."/>
            <person name="Deng Z."/>
            <person name="Mays A.D."/>
            <person name="Dew I."/>
            <person name="Dietz S.M."/>
            <person name="Dodson K."/>
            <person name="Doup L.E."/>
            <person name="Downes M."/>
            <person name="Dugan-Rocha S."/>
            <person name="Dunkov B.C."/>
            <person name="Dunn P."/>
            <person name="Durbin K.J."/>
            <person name="Evangelista C.C."/>
            <person name="Ferraz C."/>
            <person name="Ferriera S."/>
            <person name="Fleischmann W."/>
            <person name="Fosler C."/>
            <person name="Gabrielian A.E."/>
            <person name="Garg N.S."/>
            <person name="Gelbart W.M."/>
            <person name="Glasser K."/>
            <person name="Glodek A."/>
            <person name="Gong F."/>
            <person name="Gorrell J.H."/>
            <person name="Gu Z."/>
            <person name="Guan P."/>
            <person name="Harris M."/>
            <person name="Harris N.L."/>
            <person name="Harvey D.A."/>
            <person name="Heiman T.J."/>
            <person name="Hernandez J.R."/>
            <person name="Houck J."/>
            <person name="Hostin D."/>
            <person name="Houston K.A."/>
            <person name="Howland T.J."/>
            <person name="Wei M.-H."/>
            <person name="Ibegwam C."/>
            <person name="Jalali M."/>
            <person name="Kalush F."/>
            <person name="Karpen G.H."/>
            <person name="Ke Z."/>
            <person name="Kennison J.A."/>
            <person name="Ketchum K.A."/>
            <person name="Kimmel B.E."/>
            <person name="Kodira C.D."/>
            <person name="Kraft C.L."/>
            <person name="Kravitz S."/>
            <person name="Kulp D."/>
            <person name="Lai Z."/>
            <person name="Lasko P."/>
            <person name="Lei Y."/>
            <person name="Levitsky A.A."/>
            <person name="Li J.H."/>
            <person name="Li Z."/>
            <person name="Liang Y."/>
            <person name="Lin X."/>
            <person name="Liu X."/>
            <person name="Mattei B."/>
            <person name="McIntosh T.C."/>
            <person name="McLeod M.P."/>
            <person name="McPherson D."/>
            <person name="Merkulov G."/>
            <person name="Milshina N.V."/>
            <person name="Mobarry C."/>
            <person name="Morris J."/>
            <person name="Moshrefi A."/>
            <person name="Mount S.M."/>
            <person name="Moy M."/>
            <person name="Murphy B."/>
            <person name="Murphy L."/>
            <person name="Muzny D.M."/>
            <person name="Nelson D.L."/>
            <person name="Nelson D.R."/>
            <person name="Nelson K.A."/>
            <person name="Nixon K."/>
            <person name="Nusskern D.R."/>
            <person name="Pacleb J.M."/>
            <person name="Palazzolo M."/>
            <person name="Pittman G.S."/>
            <person name="Pan S."/>
            <person name="Pollard J."/>
            <person name="Puri V."/>
            <person name="Reese M.G."/>
            <person name="Reinert K."/>
            <person name="Remington K."/>
            <person name="Saunders R.D.C."/>
            <person name="Scheeler F."/>
            <person name="Shen H."/>
            <person name="Shue B.C."/>
            <person name="Siden-Kiamos I."/>
            <person name="Simpson M."/>
            <person name="Skupski M.P."/>
            <person name="Smith T.J."/>
            <person name="Spier E."/>
            <person name="Spradling A.C."/>
            <person name="Stapleton M."/>
            <person name="Strong R."/>
            <person name="Sun E."/>
            <person name="Svirskas R."/>
            <person name="Tector C."/>
            <person name="Turner R."/>
            <person name="Venter E."/>
            <person name="Wang A.H."/>
            <person name="Wang X."/>
            <person name="Wang Z.-Y."/>
            <person name="Wassarman D.A."/>
            <person name="Weinstock G.M."/>
            <person name="Weissenbach J."/>
            <person name="Williams S.M."/>
            <person name="Woodage T."/>
            <person name="Worley K.C."/>
            <person name="Wu D."/>
            <person name="Yang S."/>
            <person name="Yao Q.A."/>
            <person name="Ye J."/>
            <person name="Yeh R.-F."/>
            <person name="Zaveri J.S."/>
            <person name="Zhan M."/>
            <person name="Zhang G."/>
            <person name="Zhao Q."/>
            <person name="Zheng L."/>
            <person name="Zheng X.H."/>
            <person name="Zhong F.N."/>
            <person name="Zhong W."/>
            <person name="Zhou X."/>
            <person name="Zhu S.C."/>
            <person name="Zhu X."/>
            <person name="Smith H.O."/>
            <person name="Gibbs R.A."/>
            <person name="Myers E.W."/>
            <person name="Rubin G.M."/>
            <person name="Venter J.C."/>
        </authorList>
    </citation>
    <scope>NUCLEOTIDE SEQUENCE [LARGE SCALE GENOMIC DNA]</scope>
    <source>
        <strain>Berkeley</strain>
    </source>
</reference>
<reference key="2">
    <citation type="journal article" date="2002" name="Genome Biol.">
        <title>Annotation of the Drosophila melanogaster euchromatic genome: a systematic review.</title>
        <authorList>
            <person name="Misra S."/>
            <person name="Crosby M.A."/>
            <person name="Mungall C.J."/>
            <person name="Matthews B.B."/>
            <person name="Campbell K.S."/>
            <person name="Hradecky P."/>
            <person name="Huang Y."/>
            <person name="Kaminker J.S."/>
            <person name="Millburn G.H."/>
            <person name="Prochnik S.E."/>
            <person name="Smith C.D."/>
            <person name="Tupy J.L."/>
            <person name="Whitfield E.J."/>
            <person name="Bayraktaroglu L."/>
            <person name="Berman B.P."/>
            <person name="Bettencourt B.R."/>
            <person name="Celniker S.E."/>
            <person name="de Grey A.D.N.J."/>
            <person name="Drysdale R.A."/>
            <person name="Harris N.L."/>
            <person name="Richter J."/>
            <person name="Russo S."/>
            <person name="Schroeder A.J."/>
            <person name="Shu S.Q."/>
            <person name="Stapleton M."/>
            <person name="Yamada C."/>
            <person name="Ashburner M."/>
            <person name="Gelbart W.M."/>
            <person name="Rubin G.M."/>
            <person name="Lewis S.E."/>
        </authorList>
    </citation>
    <scope>GENOME REANNOTATION</scope>
    <source>
        <strain>Berkeley</strain>
    </source>
</reference>
<reference key="3">
    <citation type="journal article" date="1999" name="Mol. Gen. Genet.">
        <title>Identification of nuclear genes encoding mitochondrial proteins: isolation of a collection of D. melanogaster cDNAs homologous to sequences in the Human Gene Index database.</title>
        <authorList>
            <person name="Caggese C."/>
            <person name="Ragone G."/>
            <person name="Perrini B."/>
            <person name="Moschetti R."/>
            <person name="de Pinto V."/>
            <person name="Caizzi R."/>
            <person name="Barsanti P."/>
        </authorList>
    </citation>
    <scope>NUCLEOTIDE SEQUENCE [MRNA] OF 1-653</scope>
    <source>
        <tissue>Ovary</tissue>
    </source>
</reference>
<proteinExistence type="evidence at protein level"/>
<feature type="transit peptide" description="Mitochondrion" evidence="1">
    <location>
        <begin position="1"/>
        <end position="27"/>
    </location>
</feature>
<feature type="chain" id="PRO_0000019971" description="NADH-ubiquinone oxidoreductase 75 kDa subunit, mitochondrial">
    <location>
        <begin position="28"/>
        <end position="731"/>
    </location>
</feature>
<feature type="domain" description="2Fe-2S ferredoxin-type" evidence="2">
    <location>
        <begin position="40"/>
        <end position="118"/>
    </location>
</feature>
<feature type="domain" description="4Fe-4S His(Cys)3-ligated-type" evidence="4">
    <location>
        <begin position="118"/>
        <end position="157"/>
    </location>
</feature>
<feature type="domain" description="4Fe-4S Mo/W bis-MGD-type" evidence="3">
    <location>
        <begin position="259"/>
        <end position="315"/>
    </location>
</feature>
<feature type="binding site" evidence="1">
    <location>
        <position position="74"/>
    </location>
    <ligand>
        <name>[2Fe-2S] cluster</name>
        <dbReference type="ChEBI" id="CHEBI:190135"/>
    </ligand>
</feature>
<feature type="binding site" evidence="1">
    <location>
        <position position="85"/>
    </location>
    <ligand>
        <name>[2Fe-2S] cluster</name>
        <dbReference type="ChEBI" id="CHEBI:190135"/>
    </ligand>
</feature>
<feature type="binding site" evidence="1">
    <location>
        <position position="88"/>
    </location>
    <ligand>
        <name>[2Fe-2S] cluster</name>
        <dbReference type="ChEBI" id="CHEBI:190135"/>
    </ligand>
</feature>
<feature type="binding site" evidence="1">
    <location>
        <position position="102"/>
    </location>
    <ligand>
        <name>[2Fe-2S] cluster</name>
        <dbReference type="ChEBI" id="CHEBI:190135"/>
    </ligand>
</feature>
<feature type="binding site" evidence="4">
    <location>
        <position position="134"/>
    </location>
    <ligand>
        <name>[4Fe-4S] cluster</name>
        <dbReference type="ChEBI" id="CHEBI:49883"/>
        <label>1</label>
    </ligand>
</feature>
<feature type="binding site" evidence="4">
    <location>
        <position position="138"/>
    </location>
    <ligand>
        <name>[4Fe-4S] cluster</name>
        <dbReference type="ChEBI" id="CHEBI:49883"/>
        <label>1</label>
    </ligand>
</feature>
<feature type="binding site" evidence="4">
    <location>
        <position position="141"/>
    </location>
    <ligand>
        <name>[4Fe-4S] cluster</name>
        <dbReference type="ChEBI" id="CHEBI:49883"/>
        <label>1</label>
    </ligand>
</feature>
<feature type="binding site" evidence="4">
    <location>
        <position position="147"/>
    </location>
    <ligand>
        <name>[4Fe-4S] cluster</name>
        <dbReference type="ChEBI" id="CHEBI:49883"/>
        <label>1</label>
    </ligand>
</feature>
<feature type="binding site" evidence="1">
    <location>
        <position position="190"/>
    </location>
    <ligand>
        <name>[4Fe-4S] cluster</name>
        <dbReference type="ChEBI" id="CHEBI:49883"/>
        <label>2</label>
    </ligand>
</feature>
<feature type="binding site" evidence="1">
    <location>
        <position position="193"/>
    </location>
    <ligand>
        <name>[4Fe-4S] cluster</name>
        <dbReference type="ChEBI" id="CHEBI:49883"/>
        <label>2</label>
    </ligand>
</feature>
<feature type="binding site" evidence="1">
    <location>
        <position position="196"/>
    </location>
    <ligand>
        <name>[4Fe-4S] cluster</name>
        <dbReference type="ChEBI" id="CHEBI:49883"/>
        <label>2</label>
    </ligand>
</feature>
<feature type="binding site" evidence="1">
    <location>
        <position position="240"/>
    </location>
    <ligand>
        <name>[4Fe-4S] cluster</name>
        <dbReference type="ChEBI" id="CHEBI:49883"/>
        <label>2</label>
    </ligand>
</feature>
<feature type="sequence conflict" description="In Ref. 3; CAA70284." evidence="5" ref="3">
    <original>Q</original>
    <variation>L</variation>
    <location>
        <position position="65"/>
    </location>
</feature>
<feature type="sequence conflict" description="In Ref. 3; CAA70284." evidence="5" ref="3">
    <original>K</original>
    <variation>N</variation>
    <location>
        <position position="94"/>
    </location>
</feature>
<feature type="sequence conflict" description="In Ref. 3; CAA70284." evidence="5" ref="3">
    <original>R</original>
    <variation>P</variation>
    <location>
        <position position="111"/>
    </location>
</feature>
<feature type="sequence conflict" description="In Ref. 3; CAA70284." evidence="5" ref="3">
    <original>R</original>
    <variation>P</variation>
    <location>
        <position position="120"/>
    </location>
</feature>
<feature type="sequence conflict" description="In Ref. 3; CAA70284." evidence="5" ref="3">
    <original>A</original>
    <variation>S</variation>
    <location>
        <position position="470"/>
    </location>
</feature>
<feature type="sequence conflict" description="In Ref. 3; CAA70284." evidence="5" ref="3">
    <original>Q</original>
    <variation>H</variation>
    <location>
        <position position="611"/>
    </location>
</feature>
<feature type="strand" evidence="7">
    <location>
        <begin position="42"/>
        <end position="46"/>
    </location>
</feature>
<feature type="strand" evidence="7">
    <location>
        <begin position="49"/>
        <end position="53"/>
    </location>
</feature>
<feature type="helix" evidence="7">
    <location>
        <begin position="59"/>
        <end position="66"/>
    </location>
</feature>
<feature type="strand" evidence="7">
    <location>
        <begin position="89"/>
        <end position="94"/>
    </location>
</feature>
<feature type="turn" evidence="7">
    <location>
        <begin position="101"/>
        <end position="103"/>
    </location>
</feature>
<feature type="strand" evidence="7">
    <location>
        <begin position="111"/>
        <end position="116"/>
    </location>
</feature>
<feature type="helix" evidence="7">
    <location>
        <begin position="117"/>
        <end position="130"/>
    </location>
</feature>
<feature type="strand" evidence="7">
    <location>
        <begin position="132"/>
        <end position="134"/>
    </location>
</feature>
<feature type="helix" evidence="7">
    <location>
        <begin position="138"/>
        <end position="140"/>
    </location>
</feature>
<feature type="turn" evidence="7">
    <location>
        <begin position="142"/>
        <end position="145"/>
    </location>
</feature>
<feature type="helix" evidence="7">
    <location>
        <begin position="148"/>
        <end position="155"/>
    </location>
</feature>
<feature type="helix" evidence="7">
    <location>
        <begin position="164"/>
        <end position="166"/>
    </location>
</feature>
<feature type="turn" evidence="7">
    <location>
        <begin position="167"/>
        <end position="169"/>
    </location>
</feature>
<feature type="strand" evidence="7">
    <location>
        <begin position="181"/>
        <end position="185"/>
    </location>
</feature>
<feature type="helix" evidence="7">
    <location>
        <begin position="187"/>
        <end position="189"/>
    </location>
</feature>
<feature type="helix" evidence="7">
    <location>
        <begin position="195"/>
        <end position="202"/>
    </location>
</feature>
<feature type="strand" evidence="7">
    <location>
        <begin position="211"/>
        <end position="213"/>
    </location>
</feature>
<feature type="helix" evidence="7">
    <location>
        <begin position="215"/>
        <end position="217"/>
    </location>
</feature>
<feature type="strand" evidence="7">
    <location>
        <begin position="219"/>
        <end position="221"/>
    </location>
</feature>
<feature type="turn" evidence="7">
    <location>
        <begin position="231"/>
        <end position="234"/>
    </location>
</feature>
<feature type="helix" evidence="7">
    <location>
        <begin position="235"/>
        <end position="239"/>
    </location>
</feature>
<feature type="strand" evidence="7">
    <location>
        <begin position="245"/>
        <end position="248"/>
    </location>
</feature>
<feature type="turn" evidence="7">
    <location>
        <begin position="249"/>
        <end position="252"/>
    </location>
</feature>
<feature type="turn" evidence="7">
    <location>
        <begin position="256"/>
        <end position="258"/>
    </location>
</feature>
<feature type="strand" evidence="7">
    <location>
        <begin position="260"/>
        <end position="265"/>
    </location>
</feature>
<feature type="strand" evidence="7">
    <location>
        <begin position="274"/>
        <end position="289"/>
    </location>
</feature>
<feature type="turn" evidence="7">
    <location>
        <begin position="293"/>
        <end position="298"/>
    </location>
</feature>
<feature type="helix" evidence="7">
    <location>
        <begin position="302"/>
        <end position="305"/>
    </location>
</feature>
<feature type="helix" evidence="7">
    <location>
        <begin position="310"/>
        <end position="312"/>
    </location>
</feature>
<feature type="strand" evidence="7">
    <location>
        <begin position="313"/>
        <end position="315"/>
    </location>
</feature>
<feature type="strand" evidence="7">
    <location>
        <begin position="320"/>
        <end position="322"/>
    </location>
</feature>
<feature type="strand" evidence="7">
    <location>
        <begin position="324"/>
        <end position="326"/>
    </location>
</feature>
<feature type="strand" evidence="7">
    <location>
        <begin position="328"/>
        <end position="331"/>
    </location>
</feature>
<feature type="helix" evidence="7">
    <location>
        <begin position="333"/>
        <end position="347"/>
    </location>
</feature>
<feature type="strand" evidence="7">
    <location>
        <begin position="351"/>
        <end position="355"/>
    </location>
</feature>
<feature type="helix" evidence="7">
    <location>
        <begin position="361"/>
        <end position="373"/>
    </location>
</feature>
<feature type="strand" evidence="7">
    <location>
        <begin position="378"/>
        <end position="380"/>
    </location>
</feature>
<feature type="helix" evidence="7">
    <location>
        <begin position="389"/>
        <end position="391"/>
    </location>
</feature>
<feature type="helix" evidence="7">
    <location>
        <begin position="393"/>
        <end position="396"/>
    </location>
</feature>
<feature type="strand" evidence="7">
    <location>
        <begin position="397"/>
        <end position="400"/>
    </location>
</feature>
<feature type="helix" evidence="7">
    <location>
        <begin position="402"/>
        <end position="405"/>
    </location>
</feature>
<feature type="strand" evidence="7">
    <location>
        <begin position="409"/>
        <end position="415"/>
    </location>
</feature>
<feature type="helix" evidence="7">
    <location>
        <begin position="418"/>
        <end position="421"/>
    </location>
</feature>
<feature type="helix" evidence="7">
    <location>
        <begin position="423"/>
        <end position="435"/>
    </location>
</feature>
<feature type="strand" evidence="7">
    <location>
        <begin position="439"/>
        <end position="445"/>
    </location>
</feature>
<feature type="helix" evidence="7">
    <location>
        <begin position="462"/>
        <end position="468"/>
    </location>
</feature>
<feature type="helix" evidence="7">
    <location>
        <begin position="472"/>
        <end position="479"/>
    </location>
</feature>
<feature type="strand" evidence="7">
    <location>
        <begin position="480"/>
        <end position="488"/>
    </location>
</feature>
<feature type="helix" evidence="7">
    <location>
        <begin position="489"/>
        <end position="493"/>
    </location>
</feature>
<feature type="helix" evidence="7">
    <location>
        <begin position="497"/>
        <end position="511"/>
    </location>
</feature>
<feature type="strand" evidence="7">
    <location>
        <begin position="519"/>
        <end position="522"/>
    </location>
</feature>
<feature type="helix" evidence="7">
    <location>
        <begin position="526"/>
        <end position="534"/>
    </location>
</feature>
<feature type="helix" evidence="7">
    <location>
        <begin position="541"/>
        <end position="544"/>
    </location>
</feature>
<feature type="strand" evidence="7">
    <location>
        <begin position="549"/>
        <end position="555"/>
    </location>
</feature>
<feature type="turn" evidence="7">
    <location>
        <begin position="563"/>
        <end position="565"/>
    </location>
</feature>
<feature type="strand" evidence="7">
    <location>
        <begin position="571"/>
        <end position="578"/>
    </location>
</feature>
<feature type="helix" evidence="7">
    <location>
        <begin position="581"/>
        <end position="585"/>
    </location>
</feature>
<feature type="strand" evidence="7">
    <location>
        <begin position="587"/>
        <end position="592"/>
    </location>
</feature>
<feature type="helix" evidence="7">
    <location>
        <begin position="595"/>
        <end position="597"/>
    </location>
</feature>
<feature type="strand" evidence="7">
    <location>
        <begin position="601"/>
        <end position="603"/>
    </location>
</feature>
<feature type="strand" evidence="7">
    <location>
        <begin position="609"/>
        <end position="611"/>
    </location>
</feature>
<feature type="helix" evidence="7">
    <location>
        <begin position="625"/>
        <end position="636"/>
    </location>
</feature>
<feature type="helix" evidence="7">
    <location>
        <begin position="645"/>
        <end position="655"/>
    </location>
</feature>
<feature type="helix" evidence="7">
    <location>
        <begin position="657"/>
        <end position="660"/>
    </location>
</feature>
<feature type="helix" evidence="7">
    <location>
        <begin position="694"/>
        <end position="697"/>
    </location>
</feature>
<feature type="helix" evidence="7">
    <location>
        <begin position="701"/>
        <end position="704"/>
    </location>
</feature>
<feature type="helix" evidence="7">
    <location>
        <begin position="707"/>
        <end position="726"/>
    </location>
</feature>
<dbReference type="EC" id="7.1.1.2"/>
<dbReference type="EMBL" id="AE014298">
    <property type="protein sequence ID" value="AAF46356.1"/>
    <property type="molecule type" value="Genomic_DNA"/>
</dbReference>
<dbReference type="EMBL" id="Y09063">
    <property type="protein sequence ID" value="CAA70284.1"/>
    <property type="molecule type" value="mRNA"/>
</dbReference>
<dbReference type="RefSeq" id="NP_511083.1">
    <property type="nucleotide sequence ID" value="NM_078528.3"/>
</dbReference>
<dbReference type="RefSeq" id="NP_727255.1">
    <property type="nucleotide sequence ID" value="NM_167152.2"/>
</dbReference>
<dbReference type="PDB" id="8B9Z">
    <property type="method" value="EM"/>
    <property type="resolution" value="3.28 A"/>
    <property type="chains" value="G=1-731"/>
</dbReference>
<dbReference type="PDB" id="8BA0">
    <property type="method" value="EM"/>
    <property type="resolution" value="3.68 A"/>
    <property type="chains" value="G=1-731"/>
</dbReference>
<dbReference type="PDB" id="8ESW">
    <property type="method" value="EM"/>
    <property type="resolution" value="3.30 A"/>
    <property type="chains" value="S1=1-731"/>
</dbReference>
<dbReference type="PDB" id="8ESZ">
    <property type="method" value="EM"/>
    <property type="resolution" value="3.40 A"/>
    <property type="chains" value="S1=1-731"/>
</dbReference>
<dbReference type="PDBsum" id="8B9Z"/>
<dbReference type="PDBsum" id="8BA0"/>
<dbReference type="PDBsum" id="8ESW"/>
<dbReference type="PDBsum" id="8ESZ"/>
<dbReference type="EMDB" id="EMD-15936"/>
<dbReference type="EMDB" id="EMD-15937"/>
<dbReference type="EMDB" id="EMD-28581"/>
<dbReference type="EMDB" id="EMD-28582"/>
<dbReference type="SMR" id="Q94511"/>
<dbReference type="BioGRID" id="58223">
    <property type="interactions" value="30"/>
</dbReference>
<dbReference type="ComplexPortal" id="CPX-8628">
    <property type="entry name" value="Mitochondrial respiratory chain complex I"/>
</dbReference>
<dbReference type="ComplexPortal" id="CPX-8638">
    <property type="entry name" value="Mitochondrial respiratory chain complex I, testis-specific variant"/>
</dbReference>
<dbReference type="DIP" id="DIP-17348N"/>
<dbReference type="FunCoup" id="Q94511">
    <property type="interactions" value="1266"/>
</dbReference>
<dbReference type="IntAct" id="Q94511">
    <property type="interactions" value="27"/>
</dbReference>
<dbReference type="MINT" id="Q94511"/>
<dbReference type="STRING" id="7227.FBpp0071128"/>
<dbReference type="PaxDb" id="7227-FBpp0071128"/>
<dbReference type="EnsemblMetazoa" id="FBtr0071180">
    <property type="protein sequence ID" value="FBpp0071128"/>
    <property type="gene ID" value="FBgn0017566"/>
</dbReference>
<dbReference type="EnsemblMetazoa" id="FBtr0071181">
    <property type="protein sequence ID" value="FBpp0071129"/>
    <property type="gene ID" value="FBgn0017566"/>
</dbReference>
<dbReference type="GeneID" id="31762"/>
<dbReference type="KEGG" id="dme:Dmel_CG2286"/>
<dbReference type="AGR" id="FB:FBgn0017566"/>
<dbReference type="CTD" id="31762"/>
<dbReference type="FlyBase" id="FBgn0017566">
    <property type="gene designation" value="ND-75"/>
</dbReference>
<dbReference type="VEuPathDB" id="VectorBase:FBgn0017566"/>
<dbReference type="eggNOG" id="KOG2282">
    <property type="taxonomic scope" value="Eukaryota"/>
</dbReference>
<dbReference type="GeneTree" id="ENSGT00940000153514"/>
<dbReference type="HOGENOM" id="CLU_000422_11_6_1"/>
<dbReference type="InParanoid" id="Q94511"/>
<dbReference type="OMA" id="QAMAYGV"/>
<dbReference type="OrthoDB" id="10249365at2759"/>
<dbReference type="PhylomeDB" id="Q94511"/>
<dbReference type="Reactome" id="R-DME-611105">
    <property type="pathway name" value="Respiratory electron transport"/>
</dbReference>
<dbReference type="Reactome" id="R-DME-6799198">
    <property type="pathway name" value="Complex I biogenesis"/>
</dbReference>
<dbReference type="Reactome" id="R-DME-9837999">
    <property type="pathway name" value="Mitochondrial protein degradation"/>
</dbReference>
<dbReference type="BioGRID-ORCS" id="31762">
    <property type="hits" value="0 hits in 1 CRISPR screen"/>
</dbReference>
<dbReference type="GenomeRNAi" id="31762"/>
<dbReference type="PRO" id="PR:Q94511"/>
<dbReference type="Proteomes" id="UP000000803">
    <property type="component" value="Chromosome X"/>
</dbReference>
<dbReference type="Bgee" id="FBgn0017566">
    <property type="expression patterns" value="Expressed in second segment of antenna (Drosophila) and 264 other cell types or tissues"/>
</dbReference>
<dbReference type="ExpressionAtlas" id="Q94511">
    <property type="expression patterns" value="baseline and differential"/>
</dbReference>
<dbReference type="GO" id="GO:0005743">
    <property type="term" value="C:mitochondrial inner membrane"/>
    <property type="evidence" value="ECO:0000305"/>
    <property type="project" value="FlyBase"/>
</dbReference>
<dbReference type="GO" id="GO:0045271">
    <property type="term" value="C:respiratory chain complex I"/>
    <property type="evidence" value="ECO:0000314"/>
    <property type="project" value="FlyBase"/>
</dbReference>
<dbReference type="GO" id="GO:0051537">
    <property type="term" value="F:2 iron, 2 sulfur cluster binding"/>
    <property type="evidence" value="ECO:0007669"/>
    <property type="project" value="UniProtKB-KW"/>
</dbReference>
<dbReference type="GO" id="GO:0051539">
    <property type="term" value="F:4 iron, 4 sulfur cluster binding"/>
    <property type="evidence" value="ECO:0007669"/>
    <property type="project" value="UniProtKB-KW"/>
</dbReference>
<dbReference type="GO" id="GO:0046872">
    <property type="term" value="F:metal ion binding"/>
    <property type="evidence" value="ECO:0007669"/>
    <property type="project" value="UniProtKB-KW"/>
</dbReference>
<dbReference type="GO" id="GO:0008137">
    <property type="term" value="F:NADH dehydrogenase (ubiquinone) activity"/>
    <property type="evidence" value="ECO:0007669"/>
    <property type="project" value="UniProtKB-EC"/>
</dbReference>
<dbReference type="GO" id="GO:0045333">
    <property type="term" value="P:cellular respiration"/>
    <property type="evidence" value="ECO:0000250"/>
    <property type="project" value="FlyBase"/>
</dbReference>
<dbReference type="GO" id="GO:0006120">
    <property type="term" value="P:mitochondrial electron transport, NADH to ubiquinone"/>
    <property type="evidence" value="ECO:0000305"/>
    <property type="project" value="FlyBase"/>
</dbReference>
<dbReference type="GO" id="GO:0032981">
    <property type="term" value="P:mitochondrial respiratory chain complex I assembly"/>
    <property type="evidence" value="ECO:0000318"/>
    <property type="project" value="GO_Central"/>
</dbReference>
<dbReference type="GO" id="GO:0072593">
    <property type="term" value="P:reactive oxygen species metabolic process"/>
    <property type="evidence" value="ECO:0000250"/>
    <property type="project" value="FlyBase"/>
</dbReference>
<dbReference type="CDD" id="cd00207">
    <property type="entry name" value="fer2"/>
    <property type="match status" value="1"/>
</dbReference>
<dbReference type="CDD" id="cd02773">
    <property type="entry name" value="MopB_Res-Cmplx1_Nad11"/>
    <property type="match status" value="1"/>
</dbReference>
<dbReference type="FunFam" id="3.10.20.740:FF:000001">
    <property type="entry name" value="NADH-quinone oxidoreductase subunit G"/>
    <property type="match status" value="1"/>
</dbReference>
<dbReference type="FunFam" id="3.30.200.210:FF:000002">
    <property type="entry name" value="NADH-ubiquinone oxidoreductase 75 kDa subunit"/>
    <property type="match status" value="1"/>
</dbReference>
<dbReference type="FunFam" id="3.30.70.20:FF:000002">
    <property type="entry name" value="NADH-ubiquinone oxidoreductase 75 kDa subunit"/>
    <property type="match status" value="1"/>
</dbReference>
<dbReference type="FunFam" id="3.40.50.740:FF:000021">
    <property type="entry name" value="NADH:ubiquinone oxidoreductase core subunit S1"/>
    <property type="match status" value="1"/>
</dbReference>
<dbReference type="Gene3D" id="3.10.20.740">
    <property type="match status" value="1"/>
</dbReference>
<dbReference type="Gene3D" id="3.30.200.210">
    <property type="match status" value="1"/>
</dbReference>
<dbReference type="Gene3D" id="3.30.70.20">
    <property type="match status" value="1"/>
</dbReference>
<dbReference type="Gene3D" id="3.40.50.740">
    <property type="match status" value="1"/>
</dbReference>
<dbReference type="InterPro" id="IPR036010">
    <property type="entry name" value="2Fe-2S_ferredoxin-like_sf"/>
</dbReference>
<dbReference type="InterPro" id="IPR001041">
    <property type="entry name" value="2Fe-2S_ferredoxin-type"/>
</dbReference>
<dbReference type="InterPro" id="IPR006656">
    <property type="entry name" value="Mopterin_OxRdtase"/>
</dbReference>
<dbReference type="InterPro" id="IPR006963">
    <property type="entry name" value="Mopterin_OxRdtase_4Fe-4S_dom"/>
</dbReference>
<dbReference type="InterPro" id="IPR000283">
    <property type="entry name" value="NADH_UbQ_OxRdtase_75kDa_su_CS"/>
</dbReference>
<dbReference type="InterPro" id="IPR054351">
    <property type="entry name" value="NADH_UbQ_OxRdtase_ferredoxin"/>
</dbReference>
<dbReference type="InterPro" id="IPR010228">
    <property type="entry name" value="NADH_UbQ_OxRdtase_Gsu"/>
</dbReference>
<dbReference type="InterPro" id="IPR019574">
    <property type="entry name" value="NADH_UbQ_OxRdtase_Gsu_4Fe4S-bd"/>
</dbReference>
<dbReference type="InterPro" id="IPR015405">
    <property type="entry name" value="NDUFS1-like_C"/>
</dbReference>
<dbReference type="InterPro" id="IPR050123">
    <property type="entry name" value="Prok_molybdopt-oxidoreductase"/>
</dbReference>
<dbReference type="NCBIfam" id="TIGR01973">
    <property type="entry name" value="NuoG"/>
    <property type="match status" value="1"/>
</dbReference>
<dbReference type="PANTHER" id="PTHR43105:SF13">
    <property type="entry name" value="NADH-UBIQUINONE OXIDOREDUCTASE 75 KDA SUBUNIT, MITOCHONDRIAL"/>
    <property type="match status" value="1"/>
</dbReference>
<dbReference type="PANTHER" id="PTHR43105">
    <property type="entry name" value="RESPIRATORY NITRATE REDUCTASE"/>
    <property type="match status" value="1"/>
</dbReference>
<dbReference type="Pfam" id="PF13510">
    <property type="entry name" value="Fer2_4"/>
    <property type="match status" value="1"/>
</dbReference>
<dbReference type="Pfam" id="PF22151">
    <property type="entry name" value="Fer4_NDSU1"/>
    <property type="match status" value="1"/>
</dbReference>
<dbReference type="Pfam" id="PF22117">
    <property type="entry name" value="Fer4_Nqo3"/>
    <property type="match status" value="1"/>
</dbReference>
<dbReference type="Pfam" id="PF00384">
    <property type="entry name" value="Molybdopterin"/>
    <property type="match status" value="1"/>
</dbReference>
<dbReference type="Pfam" id="PF10588">
    <property type="entry name" value="NADH-G_4Fe-4S_3"/>
    <property type="match status" value="1"/>
</dbReference>
<dbReference type="Pfam" id="PF09326">
    <property type="entry name" value="NADH_dhqG_C"/>
    <property type="match status" value="1"/>
</dbReference>
<dbReference type="SMART" id="SM00929">
    <property type="entry name" value="NADH-G_4Fe-4S_3"/>
    <property type="match status" value="1"/>
</dbReference>
<dbReference type="SUPFAM" id="SSF54292">
    <property type="entry name" value="2Fe-2S ferredoxin-like"/>
    <property type="match status" value="1"/>
</dbReference>
<dbReference type="SUPFAM" id="SSF54862">
    <property type="entry name" value="4Fe-4S ferredoxins"/>
    <property type="match status" value="1"/>
</dbReference>
<dbReference type="SUPFAM" id="SSF53706">
    <property type="entry name" value="Formate dehydrogenase/DMSO reductase, domains 1-3"/>
    <property type="match status" value="1"/>
</dbReference>
<dbReference type="PROSITE" id="PS51085">
    <property type="entry name" value="2FE2S_FER_2"/>
    <property type="match status" value="1"/>
</dbReference>
<dbReference type="PROSITE" id="PS51839">
    <property type="entry name" value="4FE4S_HC3"/>
    <property type="match status" value="1"/>
</dbReference>
<dbReference type="PROSITE" id="PS51669">
    <property type="entry name" value="4FE4S_MOW_BIS_MGD"/>
    <property type="match status" value="1"/>
</dbReference>
<dbReference type="PROSITE" id="PS00641">
    <property type="entry name" value="COMPLEX1_75K_1"/>
    <property type="match status" value="1"/>
</dbReference>
<dbReference type="PROSITE" id="PS00642">
    <property type="entry name" value="COMPLEX1_75K_2"/>
    <property type="match status" value="1"/>
</dbReference>
<dbReference type="PROSITE" id="PS00643">
    <property type="entry name" value="COMPLEX1_75K_3"/>
    <property type="match status" value="1"/>
</dbReference>
<name>NDUS1_DROME</name>
<keyword id="KW-0001">2Fe-2S</keyword>
<keyword id="KW-0002">3D-structure</keyword>
<keyword id="KW-0004">4Fe-4S</keyword>
<keyword id="KW-0249">Electron transport</keyword>
<keyword id="KW-0408">Iron</keyword>
<keyword id="KW-0411">Iron-sulfur</keyword>
<keyword id="KW-0472">Membrane</keyword>
<keyword id="KW-0479">Metal-binding</keyword>
<keyword id="KW-0496">Mitochondrion</keyword>
<keyword id="KW-0999">Mitochondrion inner membrane</keyword>
<keyword id="KW-0520">NAD</keyword>
<keyword id="KW-0560">Oxidoreductase</keyword>
<keyword id="KW-1185">Reference proteome</keyword>
<keyword id="KW-0679">Respiratory chain</keyword>
<keyword id="KW-0809">Transit peptide</keyword>
<keyword id="KW-1278">Translocase</keyword>
<keyword id="KW-0813">Transport</keyword>
<keyword id="KW-0830">Ubiquinone</keyword>
<evidence type="ECO:0000250" key="1"/>
<evidence type="ECO:0000255" key="2">
    <source>
        <dbReference type="PROSITE-ProRule" id="PRU00465"/>
    </source>
</evidence>
<evidence type="ECO:0000255" key="3">
    <source>
        <dbReference type="PROSITE-ProRule" id="PRU01004"/>
    </source>
</evidence>
<evidence type="ECO:0000255" key="4">
    <source>
        <dbReference type="PROSITE-ProRule" id="PRU01184"/>
    </source>
</evidence>
<evidence type="ECO:0000305" key="5"/>
<evidence type="ECO:0000312" key="6">
    <source>
        <dbReference type="FlyBase" id="FBgn0017566"/>
    </source>
</evidence>
<evidence type="ECO:0007829" key="7">
    <source>
        <dbReference type="PDB" id="8B9Z"/>
    </source>
</evidence>
<sequence>MIRAPLVKALGALGSPTHQMASRAVRTSAMVAQTPAKAPEKIEVFVDDIPVQVVPGTTVLQAAAQIGVEIPRFCYHERLAVAGNCRMCLVEVEKSPKPVAACAMPVMKGWRIKTNSDLTRKAREGVMEFLLMNHPLDCPICDQGGECDLQDQAMAFGSDRSRFTDINYTGKRAVEDKDIGPLVKTIMTRCIHCTRCVRFASEIAGVDDLGTTGRGNDMQIGTYVEKLFLTELSGNVIDLCPVGALTNKPYSFVARPWEIRKVSSIDVLDAVGSNIVVSTRTNEVLRILPRENEDVNEEWLADKSRFACDGLKRQRLVAPMVRMPNGELQAVEWEGALIAVAKAIKAAGGQIAGISGQLADLEAQVALKDLLNRLGSEVVATEQGFIAGGTDNRANYLLNSTIAGLEEADAVLLVGTNPRYEAPLVNTRLRKAYVHNELQIASIGPKIDLSYDHENLGADAALVKDVCSGAHAFSKVLEGAKKPAIIIGADLLERADGAAIHATVAEYCKKLKKPNWNPFNVLQTNAAQVGALDVGYKAGAQTAVKAQPKVLFLLNADAGKVTREQLPKDCFVVYIGSHGDNGASIADAVLPGAAYTEKQGIYVNTEGRPQQTLPGVSPPGMAREDWKILRALSEVVGKPLPYDNLDELRNRLEDVAPHLTRLGQLEPAGDAGAAGTISKSIGGGAIDIKLKELRDYFMTDAISRASPTMAKCISAVNKQQRENEAKQSVAI</sequence>